<feature type="chain" id="PRO_1000122358" description="Large ribosomal subunit protein bL20">
    <location>
        <begin position="1"/>
        <end position="118"/>
    </location>
</feature>
<reference key="1">
    <citation type="submission" date="2008-05" db="EMBL/GenBank/DDBJ databases">
        <title>Complete sequence of chromosome 1 of Ralstonia pickettii 12J.</title>
        <authorList>
            <person name="Lucas S."/>
            <person name="Copeland A."/>
            <person name="Lapidus A."/>
            <person name="Glavina del Rio T."/>
            <person name="Dalin E."/>
            <person name="Tice H."/>
            <person name="Bruce D."/>
            <person name="Goodwin L."/>
            <person name="Pitluck S."/>
            <person name="Meincke L."/>
            <person name="Brettin T."/>
            <person name="Detter J.C."/>
            <person name="Han C."/>
            <person name="Kuske C.R."/>
            <person name="Schmutz J."/>
            <person name="Larimer F."/>
            <person name="Land M."/>
            <person name="Hauser L."/>
            <person name="Kyrpides N."/>
            <person name="Mikhailova N."/>
            <person name="Marsh T."/>
            <person name="Richardson P."/>
        </authorList>
    </citation>
    <scope>NUCLEOTIDE SEQUENCE [LARGE SCALE GENOMIC DNA]</scope>
    <source>
        <strain>12J</strain>
    </source>
</reference>
<name>RL20_RALPJ</name>
<proteinExistence type="inferred from homology"/>
<evidence type="ECO:0000255" key="1">
    <source>
        <dbReference type="HAMAP-Rule" id="MF_00382"/>
    </source>
</evidence>
<evidence type="ECO:0000305" key="2"/>
<comment type="function">
    <text evidence="1">Binds directly to 23S ribosomal RNA and is necessary for the in vitro assembly process of the 50S ribosomal subunit. It is not involved in the protein synthesizing functions of that subunit.</text>
</comment>
<comment type="similarity">
    <text evidence="1">Belongs to the bacterial ribosomal protein bL20 family.</text>
</comment>
<organism>
    <name type="scientific">Ralstonia pickettii (strain 12J)</name>
    <dbReference type="NCBI Taxonomy" id="402626"/>
    <lineage>
        <taxon>Bacteria</taxon>
        <taxon>Pseudomonadati</taxon>
        <taxon>Pseudomonadota</taxon>
        <taxon>Betaproteobacteria</taxon>
        <taxon>Burkholderiales</taxon>
        <taxon>Burkholderiaceae</taxon>
        <taxon>Ralstonia</taxon>
    </lineage>
</organism>
<keyword id="KW-0687">Ribonucleoprotein</keyword>
<keyword id="KW-0689">Ribosomal protein</keyword>
<keyword id="KW-0694">RNA-binding</keyword>
<keyword id="KW-0699">rRNA-binding</keyword>
<protein>
    <recommendedName>
        <fullName evidence="1">Large ribosomal subunit protein bL20</fullName>
    </recommendedName>
    <alternativeName>
        <fullName evidence="2">50S ribosomal protein L20</fullName>
    </alternativeName>
</protein>
<dbReference type="EMBL" id="CP001068">
    <property type="protein sequence ID" value="ACD27109.1"/>
    <property type="molecule type" value="Genomic_DNA"/>
</dbReference>
<dbReference type="SMR" id="B2UGJ5"/>
<dbReference type="STRING" id="402626.Rpic_1974"/>
<dbReference type="KEGG" id="rpi:Rpic_1974"/>
<dbReference type="eggNOG" id="COG0292">
    <property type="taxonomic scope" value="Bacteria"/>
</dbReference>
<dbReference type="HOGENOM" id="CLU_123265_0_1_4"/>
<dbReference type="GO" id="GO:1990904">
    <property type="term" value="C:ribonucleoprotein complex"/>
    <property type="evidence" value="ECO:0007669"/>
    <property type="project" value="UniProtKB-KW"/>
</dbReference>
<dbReference type="GO" id="GO:0005840">
    <property type="term" value="C:ribosome"/>
    <property type="evidence" value="ECO:0007669"/>
    <property type="project" value="UniProtKB-KW"/>
</dbReference>
<dbReference type="GO" id="GO:0019843">
    <property type="term" value="F:rRNA binding"/>
    <property type="evidence" value="ECO:0007669"/>
    <property type="project" value="UniProtKB-UniRule"/>
</dbReference>
<dbReference type="GO" id="GO:0003735">
    <property type="term" value="F:structural constituent of ribosome"/>
    <property type="evidence" value="ECO:0007669"/>
    <property type="project" value="InterPro"/>
</dbReference>
<dbReference type="GO" id="GO:0000027">
    <property type="term" value="P:ribosomal large subunit assembly"/>
    <property type="evidence" value="ECO:0007669"/>
    <property type="project" value="UniProtKB-UniRule"/>
</dbReference>
<dbReference type="GO" id="GO:0006412">
    <property type="term" value="P:translation"/>
    <property type="evidence" value="ECO:0007669"/>
    <property type="project" value="InterPro"/>
</dbReference>
<dbReference type="CDD" id="cd07026">
    <property type="entry name" value="Ribosomal_L20"/>
    <property type="match status" value="1"/>
</dbReference>
<dbReference type="FunFam" id="1.10.1900.20:FF:000001">
    <property type="entry name" value="50S ribosomal protein L20"/>
    <property type="match status" value="1"/>
</dbReference>
<dbReference type="Gene3D" id="6.10.160.10">
    <property type="match status" value="1"/>
</dbReference>
<dbReference type="Gene3D" id="1.10.1900.20">
    <property type="entry name" value="Ribosomal protein L20"/>
    <property type="match status" value="1"/>
</dbReference>
<dbReference type="HAMAP" id="MF_00382">
    <property type="entry name" value="Ribosomal_bL20"/>
    <property type="match status" value="1"/>
</dbReference>
<dbReference type="InterPro" id="IPR005813">
    <property type="entry name" value="Ribosomal_bL20"/>
</dbReference>
<dbReference type="InterPro" id="IPR049946">
    <property type="entry name" value="RIBOSOMAL_L20_CS"/>
</dbReference>
<dbReference type="InterPro" id="IPR035566">
    <property type="entry name" value="Ribosomal_protein_bL20_C"/>
</dbReference>
<dbReference type="NCBIfam" id="TIGR01032">
    <property type="entry name" value="rplT_bact"/>
    <property type="match status" value="1"/>
</dbReference>
<dbReference type="PANTHER" id="PTHR10986">
    <property type="entry name" value="39S RIBOSOMAL PROTEIN L20"/>
    <property type="match status" value="1"/>
</dbReference>
<dbReference type="Pfam" id="PF00453">
    <property type="entry name" value="Ribosomal_L20"/>
    <property type="match status" value="1"/>
</dbReference>
<dbReference type="PRINTS" id="PR00062">
    <property type="entry name" value="RIBOSOMALL20"/>
</dbReference>
<dbReference type="SUPFAM" id="SSF74731">
    <property type="entry name" value="Ribosomal protein L20"/>
    <property type="match status" value="1"/>
</dbReference>
<dbReference type="PROSITE" id="PS00937">
    <property type="entry name" value="RIBOSOMAL_L20"/>
    <property type="match status" value="1"/>
</dbReference>
<accession>B2UGJ5</accession>
<gene>
    <name evidence="1" type="primary">rplT</name>
    <name type="ordered locus">Rpic_1974</name>
</gene>
<sequence length="118" mass="13451">MPRVKRGVTARARHKKVISAAKGFRGRRNNVYRIAKQAVMRAGQYAYRDRRNKKRVFRALWIARINAGAREHGLTYSKFMNGLKKASIELDRKVLSDMAIHDKVAFAAIVNQVKANVA</sequence>